<keyword id="KW-1185">Reference proteome</keyword>
<proteinExistence type="predicted"/>
<sequence>MDLINNKLNIEIQKFCLDLEKKYNINYNNLIDLWFNKESTERLIKCEVNLENKIKFNQKYNSDTIKIMNILFLICSDGVFGKIENNDVKPLTDEDEKICVKFGYKIMIGCLNDIPI</sequence>
<dbReference type="EMBL" id="AF303741">
    <property type="protein sequence ID" value="AAK81977.1"/>
    <property type="molecule type" value="Genomic_DNA"/>
</dbReference>
<dbReference type="RefSeq" id="NP_149506.1">
    <property type="nucleotide sequence ID" value="NC_003038.1"/>
</dbReference>
<dbReference type="SMR" id="Q91G55"/>
<dbReference type="KEGG" id="vg:1733003"/>
<dbReference type="OrthoDB" id="41147at10239"/>
<dbReference type="Proteomes" id="UP000001359">
    <property type="component" value="Genome"/>
</dbReference>
<organism>
    <name type="scientific">Invertebrate iridescent virus 6</name>
    <name type="common">IIV-6</name>
    <name type="synonym">Chilo iridescent virus</name>
    <dbReference type="NCBI Taxonomy" id="176652"/>
    <lineage>
        <taxon>Viruses</taxon>
        <taxon>Varidnaviria</taxon>
        <taxon>Bamfordvirae</taxon>
        <taxon>Nucleocytoviricota</taxon>
        <taxon>Megaviricetes</taxon>
        <taxon>Pimascovirales</taxon>
        <taxon>Iridoviridae</taxon>
        <taxon>Betairidovirinae</taxon>
        <taxon>Iridovirus</taxon>
    </lineage>
</organism>
<accession>Q91G55</accession>
<name>043L_IIV6</name>
<gene>
    <name type="ORF">IIV6-043L</name>
</gene>
<feature type="chain" id="PRO_0000377969" description="Uncharacterized protein 043L">
    <location>
        <begin position="1"/>
        <end position="116"/>
    </location>
</feature>
<reference key="1">
    <citation type="journal article" date="2001" name="Virology">
        <title>Analysis of the first complete DNA sequence of an invertebrate iridovirus: coding strategy of the genome of Chilo iridescent virus.</title>
        <authorList>
            <person name="Jakob N.J."/>
            <person name="Mueller K."/>
            <person name="Bahr U."/>
            <person name="Darai G."/>
        </authorList>
    </citation>
    <scope>NUCLEOTIDE SEQUENCE [LARGE SCALE GENOMIC DNA]</scope>
</reference>
<reference key="2">
    <citation type="journal article" date="2007" name="Virol. J.">
        <title>Comparative genomic analysis of the family Iridoviridae: re-annotating and defining the core set of iridovirus genes.</title>
        <authorList>
            <person name="Eaton H.E."/>
            <person name="Metcalf J."/>
            <person name="Penny E."/>
            <person name="Tcherepanov V."/>
            <person name="Upton C."/>
            <person name="Brunetti C.R."/>
        </authorList>
    </citation>
    <scope>GENOME REANNOTATION</scope>
</reference>
<organismHost>
    <name type="scientific">Acheta domesticus</name>
    <name type="common">House cricket</name>
    <dbReference type="NCBI Taxonomy" id="6997"/>
</organismHost>
<organismHost>
    <name type="scientific">Chilo suppressalis</name>
    <name type="common">Asiatic rice borer moth</name>
    <dbReference type="NCBI Taxonomy" id="168631"/>
</organismHost>
<organismHost>
    <name type="scientific">Gryllus bimaculatus</name>
    <name type="common">Two-spotted cricket</name>
    <dbReference type="NCBI Taxonomy" id="6999"/>
</organismHost>
<organismHost>
    <name type="scientific">Gryllus campestris</name>
    <dbReference type="NCBI Taxonomy" id="58607"/>
</organismHost>
<organismHost>
    <name type="scientific">Spodoptera frugiperda</name>
    <name type="common">Fall armyworm</name>
    <dbReference type="NCBI Taxonomy" id="7108"/>
</organismHost>
<protein>
    <recommendedName>
        <fullName>Uncharacterized protein 043L</fullName>
    </recommendedName>
</protein>